<proteinExistence type="inferred from homology"/>
<comment type="function">
    <text evidence="1">May be involved in the folding of the extracellular lipase during its passage through the periplasm.</text>
</comment>
<comment type="subcellular location">
    <subcellularLocation>
        <location evidence="1">Cell inner membrane</location>
        <topology evidence="1">Single-pass membrane protein</topology>
        <orientation evidence="1">Periplasmic side</orientation>
    </subcellularLocation>
</comment>
<comment type="similarity">
    <text evidence="3">Belongs to the lipase chaperone family.</text>
</comment>
<reference key="1">
    <citation type="submission" date="1997-06" db="EMBL/GenBank/DDBJ databases">
        <authorList>
            <person name="Manning P.A."/>
        </authorList>
    </citation>
    <scope>NUCLEOTIDE SEQUENCE [GENOMIC DNA]</scope>
    <source>
        <strain>El Tor O17 / Serotype O1</strain>
    </source>
</reference>
<reference key="2">
    <citation type="journal article" date="2000" name="Nature">
        <title>DNA sequence of both chromosomes of the cholera pathogen Vibrio cholerae.</title>
        <authorList>
            <person name="Heidelberg J.F."/>
            <person name="Eisen J.A."/>
            <person name="Nelson W.C."/>
            <person name="Clayton R.A."/>
            <person name="Gwinn M.L."/>
            <person name="Dodson R.J."/>
            <person name="Haft D.H."/>
            <person name="Hickey E.K."/>
            <person name="Peterson J.D."/>
            <person name="Umayam L.A."/>
            <person name="Gill S.R."/>
            <person name="Nelson K.E."/>
            <person name="Read T.D."/>
            <person name="Tettelin H."/>
            <person name="Richardson D.L."/>
            <person name="Ermolaeva M.D."/>
            <person name="Vamathevan J.J."/>
            <person name="Bass S."/>
            <person name="Qin H."/>
            <person name="Dragoi I."/>
            <person name="Sellers P."/>
            <person name="McDonald L.A."/>
            <person name="Utterback T.R."/>
            <person name="Fleischmann R.D."/>
            <person name="Nierman W.C."/>
            <person name="White O."/>
            <person name="Salzberg S.L."/>
            <person name="Smith H.O."/>
            <person name="Colwell R.R."/>
            <person name="Mekalanos J.J."/>
            <person name="Venter J.C."/>
            <person name="Fraser C.M."/>
        </authorList>
    </citation>
    <scope>NUCLEOTIDE SEQUENCE [LARGE SCALE GENOMIC DNA]</scope>
    <source>
        <strain>ATCC 39315 / El Tor Inaba N16961</strain>
    </source>
</reference>
<feature type="chain" id="PRO_0000218487" description="Lipase chaperone">
    <location>
        <begin position="1"/>
        <end position="284"/>
    </location>
</feature>
<feature type="transmembrane region" description="Helical" evidence="2">
    <location>
        <begin position="4"/>
        <end position="24"/>
    </location>
</feature>
<accession>O07350</accession>
<organism>
    <name type="scientific">Vibrio cholerae serotype O1 (strain ATCC 39315 / El Tor Inaba N16961)</name>
    <dbReference type="NCBI Taxonomy" id="243277"/>
    <lineage>
        <taxon>Bacteria</taxon>
        <taxon>Pseudomonadati</taxon>
        <taxon>Pseudomonadota</taxon>
        <taxon>Gammaproteobacteria</taxon>
        <taxon>Vibrionales</taxon>
        <taxon>Vibrionaceae</taxon>
        <taxon>Vibrio</taxon>
    </lineage>
</organism>
<gene>
    <name type="primary">lifO</name>
    <name type="synonym">lipB</name>
    <name type="ordered locus">VC_A0222</name>
</gene>
<evidence type="ECO:0000250" key="1"/>
<evidence type="ECO:0000255" key="2"/>
<evidence type="ECO:0000305" key="3"/>
<sequence>MKKIAWSLGILVTIGALCAIVWPSWYPSRPLVTTPSQADIQADQSSPRDLLEYFLSGLGETSLPVIQQQVQRYEQENQGLLIDSSLFAQYVQYKAALSELTLPQASGGLSTQEWWQLHQSLLDLQARYFSAEQQALFAEENRLRELAIEKRRIYEQYGQSEEAQRAWQALLLDQPDFIQRSEATAQLLPQLTQAGQGDTQQRYLARVALVGEQGAQRLAELDDSRATFEQQFQDYYQARAAILVRNELSASEQQTQIQQLREQHFAPEQWRRIDALERLKDNGE</sequence>
<protein>
    <recommendedName>
        <fullName>Lipase chaperone</fullName>
    </recommendedName>
    <alternativeName>
        <fullName>Lipase activator protein</fullName>
    </alternativeName>
    <alternativeName>
        <fullName>Lipase foldase</fullName>
    </alternativeName>
    <alternativeName>
        <fullName>Lipase helper protein</fullName>
    </alternativeName>
    <alternativeName>
        <fullName>Lipase modulator</fullName>
    </alternativeName>
</protein>
<dbReference type="EMBL" id="Y00557">
    <property type="protein sequence ID" value="CAA68635.1"/>
    <property type="molecule type" value="Genomic_DNA"/>
</dbReference>
<dbReference type="EMBL" id="AE003853">
    <property type="protein sequence ID" value="AAF96134.1"/>
    <property type="molecule type" value="Genomic_DNA"/>
</dbReference>
<dbReference type="PIR" id="D82486">
    <property type="entry name" value="D82486"/>
</dbReference>
<dbReference type="RefSeq" id="NP_232621.1">
    <property type="nucleotide sequence ID" value="NC_002506.1"/>
</dbReference>
<dbReference type="RefSeq" id="WP_000717572.1">
    <property type="nucleotide sequence ID" value="NZ_LT906615.1"/>
</dbReference>
<dbReference type="SMR" id="O07350"/>
<dbReference type="STRING" id="243277.VC_A0222"/>
<dbReference type="DNASU" id="2612551"/>
<dbReference type="EnsemblBacteria" id="AAF96134">
    <property type="protein sequence ID" value="AAF96134"/>
    <property type="gene ID" value="VC_A0222"/>
</dbReference>
<dbReference type="KEGG" id="vch:VC_A0222"/>
<dbReference type="PATRIC" id="fig|243277.26.peg.2855"/>
<dbReference type="eggNOG" id="COG5380">
    <property type="taxonomic scope" value="Bacteria"/>
</dbReference>
<dbReference type="HOGENOM" id="CLU_085683_0_0_6"/>
<dbReference type="Proteomes" id="UP000000584">
    <property type="component" value="Chromosome 2"/>
</dbReference>
<dbReference type="GO" id="GO:0005886">
    <property type="term" value="C:plasma membrane"/>
    <property type="evidence" value="ECO:0007669"/>
    <property type="project" value="UniProtKB-SubCell"/>
</dbReference>
<dbReference type="GO" id="GO:0051082">
    <property type="term" value="F:unfolded protein binding"/>
    <property type="evidence" value="ECO:0007669"/>
    <property type="project" value="UniProtKB-UniRule"/>
</dbReference>
<dbReference type="GO" id="GO:0016042">
    <property type="term" value="P:lipid catabolic process"/>
    <property type="evidence" value="ECO:0007669"/>
    <property type="project" value="UniProtKB-UniRule"/>
</dbReference>
<dbReference type="GO" id="GO:0006457">
    <property type="term" value="P:protein folding"/>
    <property type="evidence" value="ECO:0007669"/>
    <property type="project" value="UniProtKB-UniRule"/>
</dbReference>
<dbReference type="HAMAP" id="MF_00790">
    <property type="entry name" value="Lipase_chap"/>
    <property type="match status" value="1"/>
</dbReference>
<dbReference type="InterPro" id="IPR004961">
    <property type="entry name" value="Lipase_chaperone"/>
</dbReference>
<dbReference type="NCBIfam" id="NF002337">
    <property type="entry name" value="PRK01294.1-5"/>
    <property type="match status" value="1"/>
</dbReference>
<dbReference type="Pfam" id="PF03280">
    <property type="entry name" value="Lipase_chap"/>
    <property type="match status" value="1"/>
</dbReference>
<dbReference type="SUPFAM" id="SSF158855">
    <property type="entry name" value="Lipase chaperone-like"/>
    <property type="match status" value="1"/>
</dbReference>
<keyword id="KW-0997">Cell inner membrane</keyword>
<keyword id="KW-1003">Cell membrane</keyword>
<keyword id="KW-0143">Chaperone</keyword>
<keyword id="KW-0442">Lipid degradation</keyword>
<keyword id="KW-0443">Lipid metabolism</keyword>
<keyword id="KW-0472">Membrane</keyword>
<keyword id="KW-1185">Reference proteome</keyword>
<keyword id="KW-0812">Transmembrane</keyword>
<keyword id="KW-1133">Transmembrane helix</keyword>
<name>LIFO_VIBCH</name>